<gene>
    <name evidence="1" type="primary">gcvH</name>
    <name type="ordered locus">SAV0833</name>
</gene>
<proteinExistence type="inferred from homology"/>
<feature type="chain" id="PRO_0000166247" description="Glycine cleavage system H protein">
    <location>
        <begin position="1"/>
        <end position="126"/>
    </location>
</feature>
<feature type="domain" description="Lipoyl-binding" evidence="2">
    <location>
        <begin position="22"/>
        <end position="104"/>
    </location>
</feature>
<feature type="modified residue" description="N6-lipoyllysine" evidence="1">
    <location>
        <position position="63"/>
    </location>
</feature>
<protein>
    <recommendedName>
        <fullName evidence="1 4">Glycine cleavage system H protein</fullName>
    </recommendedName>
    <alternativeName>
        <fullName evidence="1">Octanoyl/lipoyl carrier protein</fullName>
    </alternativeName>
</protein>
<keyword id="KW-0450">Lipoyl</keyword>
<dbReference type="EMBL" id="BA000017">
    <property type="protein sequence ID" value="BAB56995.1"/>
    <property type="molecule type" value="Genomic_DNA"/>
</dbReference>
<dbReference type="RefSeq" id="WP_000290491.1">
    <property type="nucleotide sequence ID" value="NC_002758.2"/>
</dbReference>
<dbReference type="SMR" id="P64213"/>
<dbReference type="KEGG" id="sav:SAV0833"/>
<dbReference type="HOGENOM" id="CLU_097408_2_0_9"/>
<dbReference type="PhylomeDB" id="P64213"/>
<dbReference type="Proteomes" id="UP000002481">
    <property type="component" value="Chromosome"/>
</dbReference>
<dbReference type="GO" id="GO:0005829">
    <property type="term" value="C:cytosol"/>
    <property type="evidence" value="ECO:0007669"/>
    <property type="project" value="TreeGrafter"/>
</dbReference>
<dbReference type="GO" id="GO:0005960">
    <property type="term" value="C:glycine cleavage complex"/>
    <property type="evidence" value="ECO:0007669"/>
    <property type="project" value="InterPro"/>
</dbReference>
<dbReference type="GO" id="GO:0019464">
    <property type="term" value="P:glycine decarboxylation via glycine cleavage system"/>
    <property type="evidence" value="ECO:0007669"/>
    <property type="project" value="UniProtKB-UniRule"/>
</dbReference>
<dbReference type="CDD" id="cd06848">
    <property type="entry name" value="GCS_H"/>
    <property type="match status" value="1"/>
</dbReference>
<dbReference type="Gene3D" id="2.40.50.100">
    <property type="match status" value="1"/>
</dbReference>
<dbReference type="HAMAP" id="MF_00272">
    <property type="entry name" value="GcvH"/>
    <property type="match status" value="1"/>
</dbReference>
<dbReference type="InterPro" id="IPR003016">
    <property type="entry name" value="2-oxoA_DH_lipoyl-BS"/>
</dbReference>
<dbReference type="InterPro" id="IPR000089">
    <property type="entry name" value="Biotin_lipoyl"/>
</dbReference>
<dbReference type="InterPro" id="IPR002930">
    <property type="entry name" value="GCV_H"/>
</dbReference>
<dbReference type="InterPro" id="IPR033753">
    <property type="entry name" value="GCV_H/Fam206"/>
</dbReference>
<dbReference type="InterPro" id="IPR017453">
    <property type="entry name" value="GCV_H_sub"/>
</dbReference>
<dbReference type="InterPro" id="IPR011053">
    <property type="entry name" value="Single_hybrid_motif"/>
</dbReference>
<dbReference type="NCBIfam" id="TIGR00527">
    <property type="entry name" value="gcvH"/>
    <property type="match status" value="1"/>
</dbReference>
<dbReference type="NCBIfam" id="NF002270">
    <property type="entry name" value="PRK01202.1"/>
    <property type="match status" value="1"/>
</dbReference>
<dbReference type="PANTHER" id="PTHR11715">
    <property type="entry name" value="GLYCINE CLEAVAGE SYSTEM H PROTEIN"/>
    <property type="match status" value="1"/>
</dbReference>
<dbReference type="PANTHER" id="PTHR11715:SF3">
    <property type="entry name" value="GLYCINE CLEAVAGE SYSTEM H PROTEIN-RELATED"/>
    <property type="match status" value="1"/>
</dbReference>
<dbReference type="Pfam" id="PF01597">
    <property type="entry name" value="GCV_H"/>
    <property type="match status" value="1"/>
</dbReference>
<dbReference type="SUPFAM" id="SSF51230">
    <property type="entry name" value="Single hybrid motif"/>
    <property type="match status" value="1"/>
</dbReference>
<dbReference type="PROSITE" id="PS50968">
    <property type="entry name" value="BIOTINYL_LIPOYL"/>
    <property type="match status" value="1"/>
</dbReference>
<dbReference type="PROSITE" id="PS00189">
    <property type="entry name" value="LIPOYL"/>
    <property type="match status" value="1"/>
</dbReference>
<reference key="1">
    <citation type="journal article" date="2001" name="Lancet">
        <title>Whole genome sequencing of meticillin-resistant Staphylococcus aureus.</title>
        <authorList>
            <person name="Kuroda M."/>
            <person name="Ohta T."/>
            <person name="Uchiyama I."/>
            <person name="Baba T."/>
            <person name="Yuzawa H."/>
            <person name="Kobayashi I."/>
            <person name="Cui L."/>
            <person name="Oguchi A."/>
            <person name="Aoki K."/>
            <person name="Nagai Y."/>
            <person name="Lian J.-Q."/>
            <person name="Ito T."/>
            <person name="Kanamori M."/>
            <person name="Matsumaru H."/>
            <person name="Maruyama A."/>
            <person name="Murakami H."/>
            <person name="Hosoyama A."/>
            <person name="Mizutani-Ui Y."/>
            <person name="Takahashi N.K."/>
            <person name="Sawano T."/>
            <person name="Inoue R."/>
            <person name="Kaito C."/>
            <person name="Sekimizu K."/>
            <person name="Hirakawa H."/>
            <person name="Kuhara S."/>
            <person name="Goto S."/>
            <person name="Yabuzaki J."/>
            <person name="Kanehisa M."/>
            <person name="Yamashita A."/>
            <person name="Oshima K."/>
            <person name="Furuya K."/>
            <person name="Yoshino C."/>
            <person name="Shiba T."/>
            <person name="Hattori M."/>
            <person name="Ogasawara N."/>
            <person name="Hayashi H."/>
            <person name="Hiramatsu K."/>
        </authorList>
    </citation>
    <scope>NUCLEOTIDE SEQUENCE [LARGE SCALE GENOMIC DNA]</scope>
    <source>
        <strain>Mu50 / ATCC 700699</strain>
    </source>
</reference>
<reference key="2">
    <citation type="journal article" date="2015" name="Mol. Cell">
        <title>Identification of a class of protein ADP-ribosylating sirtuins in microbial pathogens.</title>
        <authorList>
            <person name="Rack J.G."/>
            <person name="Morra R."/>
            <person name="Barkauskaite E."/>
            <person name="Kraehenbuehl R."/>
            <person name="Ariza A."/>
            <person name="Qu Y."/>
            <person name="Ortmayer M."/>
            <person name="Leidecker O."/>
            <person name="Cameron D.R."/>
            <person name="Matic I."/>
            <person name="Peleg A.Y."/>
            <person name="Leys D."/>
            <person name="Traven A."/>
            <person name="Ahel I."/>
        </authorList>
    </citation>
    <scope>LIPOYLATION</scope>
    <source>
        <strain>Mu50 / ATCC 700699</strain>
    </source>
</reference>
<name>GCSH_STAAM</name>
<accession>P64213</accession>
<accession>Q99VH3</accession>
<organism>
    <name type="scientific">Staphylococcus aureus (strain Mu50 / ATCC 700699)</name>
    <dbReference type="NCBI Taxonomy" id="158878"/>
    <lineage>
        <taxon>Bacteria</taxon>
        <taxon>Bacillati</taxon>
        <taxon>Bacillota</taxon>
        <taxon>Bacilli</taxon>
        <taxon>Bacillales</taxon>
        <taxon>Staphylococcaceae</taxon>
        <taxon>Staphylococcus</taxon>
    </lineage>
</organism>
<comment type="function">
    <text evidence="1">The glycine cleavage system catalyzes the degradation of glycine. The H protein shuttles the methylamine group of glycine from the P protein to the T protein.</text>
</comment>
<comment type="function">
    <text evidence="1">Is also involved in protein lipoylation via its role as an octanoyl/lipoyl carrier protein intermediate.</text>
</comment>
<comment type="subunit">
    <text evidence="1">The glycine cleavage system is composed of four proteins: P, T, L and H.</text>
</comment>
<comment type="PTM">
    <text evidence="3">Is lipoylated by LplA1 (SAV1028).</text>
</comment>
<comment type="similarity">
    <text evidence="1">Belongs to the GcvH family.</text>
</comment>
<evidence type="ECO:0000255" key="1">
    <source>
        <dbReference type="HAMAP-Rule" id="MF_00272"/>
    </source>
</evidence>
<evidence type="ECO:0000255" key="2">
    <source>
        <dbReference type="PROSITE-ProRule" id="PRU01066"/>
    </source>
</evidence>
<evidence type="ECO:0000269" key="3">
    <source>
    </source>
</evidence>
<evidence type="ECO:0000303" key="4">
    <source>
    </source>
</evidence>
<sequence length="126" mass="14081">MAVPNELKYSKEHEWVKVEGNVATIGITEYAQSELGDIVFVELPETDDEINEGDTFGSVESVKTVSELYAPISGKVVEVNEELEDSPEFVNESPYEKAWMVKVEISDESQLEALLTAEKYSEMIGE</sequence>